<feature type="chain" id="PRO_0000410422" description="Probable inactive poly [ADP-ribose] polymerase SRO4">
    <location>
        <begin position="1"/>
        <end position="316"/>
    </location>
</feature>
<feature type="domain" description="PARP catalytic" evidence="2">
    <location>
        <begin position="28"/>
        <end position="255"/>
    </location>
</feature>
<feature type="domain" description="RST" evidence="3">
    <location>
        <begin position="243"/>
        <end position="314"/>
    </location>
</feature>
<feature type="region of interest" description="Disordered" evidence="4">
    <location>
        <begin position="1"/>
        <end position="28"/>
    </location>
</feature>
<feature type="compositionally biased region" description="Low complexity" evidence="4">
    <location>
        <begin position="14"/>
        <end position="23"/>
    </location>
</feature>
<name>SRO4_ARATH</name>
<keyword id="KW-0217">Developmental protein</keyword>
<keyword id="KW-0539">Nucleus</keyword>
<keyword id="KW-1185">Reference proteome</keyword>
<keyword id="KW-0346">Stress response</keyword>
<dbReference type="EMBL" id="AL049746">
    <property type="protein sequence ID" value="CAB41855.1"/>
    <property type="status" value="ALT_SEQ"/>
    <property type="molecule type" value="Genomic_DNA"/>
</dbReference>
<dbReference type="EMBL" id="CP002686">
    <property type="protein sequence ID" value="AEE78322.1"/>
    <property type="molecule type" value="Genomic_DNA"/>
</dbReference>
<dbReference type="EMBL" id="BX824791">
    <property type="status" value="NOT_ANNOTATED_CDS"/>
    <property type="molecule type" value="mRNA"/>
</dbReference>
<dbReference type="PIR" id="T07711">
    <property type="entry name" value="T07711"/>
</dbReference>
<dbReference type="RefSeq" id="NP_190356.2">
    <property type="nucleotide sequence ID" value="NM_114640.4"/>
</dbReference>
<dbReference type="SMR" id="Q9STU1"/>
<dbReference type="BioGRID" id="9246">
    <property type="interactions" value="1"/>
</dbReference>
<dbReference type="STRING" id="3702.Q9STU1"/>
<dbReference type="PaxDb" id="3702-AT3G47720.1"/>
<dbReference type="ProteomicsDB" id="226715"/>
<dbReference type="EnsemblPlants" id="AT3G47720.1">
    <property type="protein sequence ID" value="AT3G47720.1"/>
    <property type="gene ID" value="AT3G47720"/>
</dbReference>
<dbReference type="GeneID" id="823926"/>
<dbReference type="Gramene" id="AT3G47720.1">
    <property type="protein sequence ID" value="AT3G47720.1"/>
    <property type="gene ID" value="AT3G47720"/>
</dbReference>
<dbReference type="KEGG" id="ath:AT3G47720"/>
<dbReference type="Araport" id="AT3G47720"/>
<dbReference type="TAIR" id="AT3G47720">
    <property type="gene designation" value="SRO4"/>
</dbReference>
<dbReference type="eggNOG" id="ENOG502QTKK">
    <property type="taxonomic scope" value="Eukaryota"/>
</dbReference>
<dbReference type="HOGENOM" id="CLU_062533_0_0_1"/>
<dbReference type="InParanoid" id="Q9STU1"/>
<dbReference type="OMA" id="PEFVVCI"/>
<dbReference type="PRO" id="PR:Q9STU1"/>
<dbReference type="Proteomes" id="UP000006548">
    <property type="component" value="Chromosome 3"/>
</dbReference>
<dbReference type="ExpressionAtlas" id="Q9STU1">
    <property type="expression patterns" value="baseline and differential"/>
</dbReference>
<dbReference type="GO" id="GO:0005634">
    <property type="term" value="C:nucleus"/>
    <property type="evidence" value="ECO:0007669"/>
    <property type="project" value="UniProtKB-SubCell"/>
</dbReference>
<dbReference type="GO" id="GO:0003950">
    <property type="term" value="F:NAD+ poly-ADP-ribosyltransferase activity"/>
    <property type="evidence" value="ECO:0007669"/>
    <property type="project" value="InterPro"/>
</dbReference>
<dbReference type="GO" id="GO:0071456">
    <property type="term" value="P:cellular response to hypoxia"/>
    <property type="evidence" value="ECO:0007007"/>
    <property type="project" value="TAIR"/>
</dbReference>
<dbReference type="Gene3D" id="3.90.228.10">
    <property type="match status" value="1"/>
</dbReference>
<dbReference type="InterPro" id="IPR012317">
    <property type="entry name" value="Poly(ADP-ribose)pol_cat_dom"/>
</dbReference>
<dbReference type="InterPro" id="IPR044964">
    <property type="entry name" value="RCD1/SRO1-5"/>
</dbReference>
<dbReference type="InterPro" id="IPR022003">
    <property type="entry name" value="RST"/>
</dbReference>
<dbReference type="PANTHER" id="PTHR32263">
    <property type="entry name" value="INACTIVE POLY [ADP-RIBOSE] POLYMERASE SRO4-RELATED"/>
    <property type="match status" value="1"/>
</dbReference>
<dbReference type="PANTHER" id="PTHR32263:SF12">
    <property type="entry name" value="INACTIVE POLY [ADP-RIBOSE] POLYMERASE SRO4-RELATED"/>
    <property type="match status" value="1"/>
</dbReference>
<dbReference type="Pfam" id="PF12174">
    <property type="entry name" value="RST"/>
    <property type="match status" value="1"/>
</dbReference>
<dbReference type="SUPFAM" id="SSF56399">
    <property type="entry name" value="ADP-ribosylation"/>
    <property type="match status" value="1"/>
</dbReference>
<dbReference type="PROSITE" id="PS51059">
    <property type="entry name" value="PARP_CATALYTIC"/>
    <property type="match status" value="1"/>
</dbReference>
<dbReference type="PROSITE" id="PS51879">
    <property type="entry name" value="RST"/>
    <property type="match status" value="1"/>
</dbReference>
<reference key="1">
    <citation type="journal article" date="2000" name="Nature">
        <title>Sequence and analysis of chromosome 3 of the plant Arabidopsis thaliana.</title>
        <authorList>
            <person name="Salanoubat M."/>
            <person name="Lemcke K."/>
            <person name="Rieger M."/>
            <person name="Ansorge W."/>
            <person name="Unseld M."/>
            <person name="Fartmann B."/>
            <person name="Valle G."/>
            <person name="Bloecker H."/>
            <person name="Perez-Alonso M."/>
            <person name="Obermaier B."/>
            <person name="Delseny M."/>
            <person name="Boutry M."/>
            <person name="Grivell L.A."/>
            <person name="Mache R."/>
            <person name="Puigdomenech P."/>
            <person name="De Simone V."/>
            <person name="Choisne N."/>
            <person name="Artiguenave F."/>
            <person name="Robert C."/>
            <person name="Brottier P."/>
            <person name="Wincker P."/>
            <person name="Cattolico L."/>
            <person name="Weissenbach J."/>
            <person name="Saurin W."/>
            <person name="Quetier F."/>
            <person name="Schaefer M."/>
            <person name="Mueller-Auer S."/>
            <person name="Gabel C."/>
            <person name="Fuchs M."/>
            <person name="Benes V."/>
            <person name="Wurmbach E."/>
            <person name="Drzonek H."/>
            <person name="Erfle H."/>
            <person name="Jordan N."/>
            <person name="Bangert S."/>
            <person name="Wiedelmann R."/>
            <person name="Kranz H."/>
            <person name="Voss H."/>
            <person name="Holland R."/>
            <person name="Brandt P."/>
            <person name="Nyakatura G."/>
            <person name="Vezzi A."/>
            <person name="D'Angelo M."/>
            <person name="Pallavicini A."/>
            <person name="Toppo S."/>
            <person name="Simionati B."/>
            <person name="Conrad A."/>
            <person name="Hornischer K."/>
            <person name="Kauer G."/>
            <person name="Loehnert T.-H."/>
            <person name="Nordsiek G."/>
            <person name="Reichelt J."/>
            <person name="Scharfe M."/>
            <person name="Schoen O."/>
            <person name="Bargues M."/>
            <person name="Terol J."/>
            <person name="Climent J."/>
            <person name="Navarro P."/>
            <person name="Collado C."/>
            <person name="Perez-Perez A."/>
            <person name="Ottenwaelder B."/>
            <person name="Duchemin D."/>
            <person name="Cooke R."/>
            <person name="Laudie M."/>
            <person name="Berger-Llauro C."/>
            <person name="Purnelle B."/>
            <person name="Masuy D."/>
            <person name="de Haan M."/>
            <person name="Maarse A.C."/>
            <person name="Alcaraz J.-P."/>
            <person name="Cottet A."/>
            <person name="Casacuberta E."/>
            <person name="Monfort A."/>
            <person name="Argiriou A."/>
            <person name="Flores M."/>
            <person name="Liguori R."/>
            <person name="Vitale D."/>
            <person name="Mannhaupt G."/>
            <person name="Haase D."/>
            <person name="Schoof H."/>
            <person name="Rudd S."/>
            <person name="Zaccaria P."/>
            <person name="Mewes H.-W."/>
            <person name="Mayer K.F.X."/>
            <person name="Kaul S."/>
            <person name="Town C.D."/>
            <person name="Koo H.L."/>
            <person name="Tallon L.J."/>
            <person name="Jenkins J."/>
            <person name="Rooney T."/>
            <person name="Rizzo M."/>
            <person name="Walts A."/>
            <person name="Utterback T."/>
            <person name="Fujii C.Y."/>
            <person name="Shea T.P."/>
            <person name="Creasy T.H."/>
            <person name="Haas B."/>
            <person name="Maiti R."/>
            <person name="Wu D."/>
            <person name="Peterson J."/>
            <person name="Van Aken S."/>
            <person name="Pai G."/>
            <person name="Militscher J."/>
            <person name="Sellers P."/>
            <person name="Gill J.E."/>
            <person name="Feldblyum T.V."/>
            <person name="Preuss D."/>
            <person name="Lin X."/>
            <person name="Nierman W.C."/>
            <person name="Salzberg S.L."/>
            <person name="White O."/>
            <person name="Venter J.C."/>
            <person name="Fraser C.M."/>
            <person name="Kaneko T."/>
            <person name="Nakamura Y."/>
            <person name="Sato S."/>
            <person name="Kato T."/>
            <person name="Asamizu E."/>
            <person name="Sasamoto S."/>
            <person name="Kimura T."/>
            <person name="Idesawa K."/>
            <person name="Kawashima K."/>
            <person name="Kishida Y."/>
            <person name="Kiyokawa C."/>
            <person name="Kohara M."/>
            <person name="Matsumoto M."/>
            <person name="Matsuno A."/>
            <person name="Muraki A."/>
            <person name="Nakayama S."/>
            <person name="Nakazaki N."/>
            <person name="Shinpo S."/>
            <person name="Takeuchi C."/>
            <person name="Wada T."/>
            <person name="Watanabe A."/>
            <person name="Yamada M."/>
            <person name="Yasuda M."/>
            <person name="Tabata S."/>
        </authorList>
    </citation>
    <scope>NUCLEOTIDE SEQUENCE [LARGE SCALE GENOMIC DNA]</scope>
    <source>
        <strain>cv. Columbia</strain>
    </source>
</reference>
<reference key="2">
    <citation type="journal article" date="2017" name="Plant J.">
        <title>Araport11: a complete reannotation of the Arabidopsis thaliana reference genome.</title>
        <authorList>
            <person name="Cheng C.Y."/>
            <person name="Krishnakumar V."/>
            <person name="Chan A.P."/>
            <person name="Thibaud-Nissen F."/>
            <person name="Schobel S."/>
            <person name="Town C.D."/>
        </authorList>
    </citation>
    <scope>GENOME REANNOTATION</scope>
    <source>
        <strain>cv. Columbia</strain>
    </source>
</reference>
<reference key="3">
    <citation type="journal article" date="2004" name="Genome Res.">
        <title>Whole genome sequence comparisons and 'full-length' cDNA sequences: a combined approach to evaluate and improve Arabidopsis genome annotation.</title>
        <authorList>
            <person name="Castelli V."/>
            <person name="Aury J.-M."/>
            <person name="Jaillon O."/>
            <person name="Wincker P."/>
            <person name="Clepet C."/>
            <person name="Menard M."/>
            <person name="Cruaud C."/>
            <person name="Quetier F."/>
            <person name="Scarpelli C."/>
            <person name="Schaechter V."/>
            <person name="Temple G."/>
            <person name="Caboche M."/>
            <person name="Weissenbach J."/>
            <person name="Salanoubat M."/>
        </authorList>
    </citation>
    <scope>NUCLEOTIDE SEQUENCE [LARGE SCALE MRNA]</scope>
    <source>
        <strain>cv. Columbia</strain>
    </source>
</reference>
<organism>
    <name type="scientific">Arabidopsis thaliana</name>
    <name type="common">Mouse-ear cress</name>
    <dbReference type="NCBI Taxonomy" id="3702"/>
    <lineage>
        <taxon>Eukaryota</taxon>
        <taxon>Viridiplantae</taxon>
        <taxon>Streptophyta</taxon>
        <taxon>Embryophyta</taxon>
        <taxon>Tracheophyta</taxon>
        <taxon>Spermatophyta</taxon>
        <taxon>Magnoliopsida</taxon>
        <taxon>eudicotyledons</taxon>
        <taxon>Gunneridae</taxon>
        <taxon>Pentapetalae</taxon>
        <taxon>rosids</taxon>
        <taxon>malvids</taxon>
        <taxon>Brassicales</taxon>
        <taxon>Brassicaceae</taxon>
        <taxon>Camelineae</taxon>
        <taxon>Arabidopsis</taxon>
    </lineage>
</organism>
<protein>
    <recommendedName>
        <fullName>Probable inactive poly [ADP-ribose] polymerase SRO4</fullName>
    </recommendedName>
    <alternativeName>
        <fullName>Protein SIMILAR TO RCD ONE 4</fullName>
    </alternativeName>
</protein>
<gene>
    <name type="primary">SRO4</name>
    <name type="synonym">CEO5</name>
    <name type="ordered locus">At3g47720</name>
    <name type="ORF">T23J7.50</name>
</gene>
<evidence type="ECO:0000250" key="1"/>
<evidence type="ECO:0000255" key="2">
    <source>
        <dbReference type="PROSITE-ProRule" id="PRU00397"/>
    </source>
</evidence>
<evidence type="ECO:0000255" key="3">
    <source>
        <dbReference type="PROSITE-ProRule" id="PRU01227"/>
    </source>
</evidence>
<evidence type="ECO:0000256" key="4">
    <source>
        <dbReference type="SAM" id="MobiDB-lite"/>
    </source>
</evidence>
<evidence type="ECO:0000305" key="5"/>
<sequence length="316" mass="35420">MDYSKTEETPINEEQGSTNSSESRSNEELFSDCDQQHSSIANEFGLTELPKDDKVYELIYRHCQSKLTSHLSNQFEIVSILKNGFQTPLGQAKLKAFQIYAESVAKKSGSCCGNKAAVAEAARVKYGCCGVEKEELKAILMYGFSNNALCLSPDNAPLQCMIDPSSSCNEDGISFLLFSRIIMGKSEVVCSTSQSYPSSMEFDSGVDSLTSPNKYIIWSTHMNTHVLPEFVVCIKTPSILKRKNPKSPWISFPVLINSISKFLNQSQIRLIHKHYKEHQDRRISRCELIQRLRSITGDSLLVQIIKSVGQKVHKDT</sequence>
<accession>Q9STU1</accession>
<accession>F4JCP0</accession>
<proteinExistence type="evidence at transcript level"/>
<comment type="function">
    <text evidence="1">Probable inactive ADP-ribosyltransferase that may be involved in stress and developmental responses.</text>
</comment>
<comment type="subcellular location">
    <subcellularLocation>
        <location evidence="1">Nucleus</location>
    </subcellularLocation>
</comment>
<comment type="caution">
    <text evidence="5">Lacks the conserved catalytic triad His-Tyr-Glu of the active site.</text>
</comment>
<comment type="sequence caution" evidence="5">
    <conflict type="erroneous gene model prediction">
        <sequence resource="EMBL-CDS" id="CAB41855"/>
    </conflict>
</comment>